<accession>P0CA91</accession>
<proteinExistence type="inferred from homology"/>
<feature type="chain" id="PRO_0000373578" description="Late protein I196L">
    <location>
        <begin position="1"/>
        <end position="221"/>
    </location>
</feature>
<feature type="repeat" description="1">
    <location>
        <begin position="28"/>
        <end position="48"/>
    </location>
</feature>
<feature type="repeat" description="2">
    <location>
        <begin position="49"/>
        <end position="69"/>
    </location>
</feature>
<feature type="repeat" description="3">
    <location>
        <begin position="70"/>
        <end position="90"/>
    </location>
</feature>
<feature type="repeat" description="4; approximate">
    <location>
        <begin position="91"/>
        <end position="112"/>
    </location>
</feature>
<keyword id="KW-0426">Late protein</keyword>
<keyword id="KW-0677">Repeat</keyword>
<evidence type="ECO:0000305" key="1"/>
<name>VF196_ASFM2</name>
<organism>
    <name type="scientific">African swine fever virus (isolate Tick/Malawi/Lil 20-1/1983)</name>
    <name type="common">ASFV</name>
    <dbReference type="NCBI Taxonomy" id="10500"/>
    <lineage>
        <taxon>Viruses</taxon>
        <taxon>Varidnaviria</taxon>
        <taxon>Bamfordvirae</taxon>
        <taxon>Nucleocytoviricota</taxon>
        <taxon>Pokkesviricetes</taxon>
        <taxon>Asfuvirales</taxon>
        <taxon>Asfarviridae</taxon>
        <taxon>Asfivirus</taxon>
        <taxon>African swine fever virus</taxon>
    </lineage>
</organism>
<comment type="induction">
    <text evidence="1">Expressed in the late phase of the viral replicative cycle.</text>
</comment>
<comment type="similarity">
    <text evidence="1">Belongs to the asfivirus I196L family.</text>
</comment>
<organismHost>
    <name type="scientific">Ornithodoros</name>
    <name type="common">relapsing fever ticks</name>
    <dbReference type="NCBI Taxonomy" id="6937"/>
</organismHost>
<organismHost>
    <name type="scientific">Phacochoerus aethiopicus</name>
    <name type="common">Warthog</name>
    <dbReference type="NCBI Taxonomy" id="85517"/>
</organismHost>
<organismHost>
    <name type="scientific">Phacochoerus africanus</name>
    <name type="common">Warthog</name>
    <dbReference type="NCBI Taxonomy" id="41426"/>
</organismHost>
<organismHost>
    <name type="scientific">Potamochoerus larvatus</name>
    <name type="common">Bushpig</name>
    <dbReference type="NCBI Taxonomy" id="273792"/>
</organismHost>
<organismHost>
    <name type="scientific">Sus scrofa</name>
    <name type="common">Pig</name>
    <dbReference type="NCBI Taxonomy" id="9823"/>
</organismHost>
<protein>
    <recommendedName>
        <fullName>Late protein I196L</fullName>
    </recommendedName>
</protein>
<sequence length="221" mass="24744">MLFRYLVWLFRFIEVKNIASISLLVIGSNYLTTAIPNNTSTNISPTTSSNYSMTAIPNNTSTNISPTTSSNYSMTAIPNNTSTNISPTTSSNYSMTAIPNNISDKEDYTYFSTDKTASDGFTPITLYRAIRSTLNDTSTKTMTDHGLTRPYRPTTVIFHSDTSLPVKNATRDNIIKKTYRQVLSFFIRSNPLFPCFKNHEVFLNLANILNTILCIIVIKNV</sequence>
<gene>
    <name type="ordered locus">Mal-153</name>
</gene>
<dbReference type="EMBL" id="AY261361">
    <property type="status" value="NOT_ANNOTATED_CDS"/>
    <property type="molecule type" value="Genomic_DNA"/>
</dbReference>
<dbReference type="Proteomes" id="UP000000860">
    <property type="component" value="Segment"/>
</dbReference>
<reference key="1">
    <citation type="submission" date="2003-03" db="EMBL/GenBank/DDBJ databases">
        <title>African swine fever virus genomes.</title>
        <authorList>
            <person name="Kutish G.F."/>
            <person name="Rock D.L."/>
        </authorList>
    </citation>
    <scope>NUCLEOTIDE SEQUENCE [LARGE SCALE GENOMIC DNA]</scope>
</reference>